<accession>Q97T80</accession>
<name>ZMPC_STRPN</name>
<proteinExistence type="inferred from homology"/>
<sequence>MSRKSIGEKRHSFSMRKLSVGLVSVTVSSFFLMSQGIQSVSADNMESPIHYKYMTEGKLTDEEKSLLVEALPQLAEESDDTYYLVYRSQQFLPNTGFNPTVGTFLFTAGLSLLVLLVSKRENGKKRLVHFLLLTSMGVQLLPASAFGLTSQILSAYNSQLSIGVGEHLPEPLKIEGYQYIGYIKTKKQDNTELSRTVDGKYSAQRDSQPNSTKTSDVVHSADLEWNQGQGKVSLQGEASGDDGLSEKSSIAADNLSSNDSFASQVEQNPDHKGESVVRPTVPEQGNPVSATTVQSAEEEVLATTNDRPEYKLPLETKGTQEPGHEGEAAVREDLPVYTKPLETKGTQGPGHEGEAAVREEEPAYTEPLATKGTQEPGHEGKATVREETLEYTEPVATKGTQEPEHEGEAAVEEELPALEVTTRNRTEIQNIPYTTEEIQDPTLLKNRRKIERQGQAGTRTIQYEDYIVNGNVVETKEVSRTEVAPVNEVVKVGTLVKVKPTVEITNLTKVENKKSITVSYNLIDTTSAYVSAKTQVFHGDKLVKEVDIENPAKEQVISGLDYYTPYTVKTHLTYNLGENNEENTETSTQDFQLEYKKIEIKDIDSVELYGKENDRYRRYLSLSEAPTDTAKYFVKVKSDRFKEMYLPVKSITENTDGTYKVTVAVDQLVEEGTDGYKDDYTFTVAKSKAEQPGVYTSFKQLVTAMQSNLSGVYTLASDMTADEVSLGDKQTSYLTGAFTGSLIGSDGTKSYAIYDLKKPLFDTLNGATVRDLDIKTVSADSKENVAALAKAANSANINNVAVEGKISGAKSVAGLVASATNTVIENSSFTGKLIANHQDSNKNDTGGIVGNITGNSSRVNKVRVDALISTNARNNNQTAGGIVGRLENGALISNSVATGEIRNGQGYSRVGGIVGSTWQNGRVNNVVSNVDVGDGYVITGDQYAAADVKNASTSVDNRKADRFATKLSKDQIDAKVADYGITVTLDDTGQDLKRNLREVDYTRLNKAEAERKVAYSNIEKLMPFYNKDLVVHYGNKVATTDKLYTTELLDVVPMKDDEVVTDINNKKNSINKVMLHFKDNTVEYLDVTFKENFINSQVIEYNVTGKEYIFTPEAFVSDYTAITNNVLSDLQNVTLNSEATKKVLGAANDAALDNLYLDRQFEEVKANIAEHLRKVLAMDKSINTTGDGVVEYVSEKIKNNKEAFMLGLTYMNRWYDINYGKMNTKDLSTYKFDFNGNNETSTLDTIVALGNSGLDNLRASNTVGLYANKLASVKGEDSVFDFVEAYRKLFLPNKTNNEWFKENTKAYIVEMKSDIAEVREKQESPTADRKYSLGVYDRISAPSWGHKSMLLPLLTLPEESVYISSNMSTLAFGSYERYRDSVDGVILSGDALRTYVRNRVDIAAKRHRDHYDIWYNLLDSASKEKLFRSVIVYDGFNVKDETGRTYWARLTDKNIGSIKEFFGPVGKWYEYNSSAGAYANGSLTHFVLDRLLDAYGTSVYTHEMVHNSDSAIYFEGNGRREGLGAELYALGLLQSVDSVNSHILALNTLYKAEKDDLNRLHTYNPVERFDSDEALQSYMHGSYDVMYTLDAMEAKAILAQNNDVKKKWFRKIENYYVRDTRHNKDTHAGNKVRPLTDEEVANLTSLNSLIDNDIINRRSYDDSREYKRNGYYTISMFSPVYAALSNSKGAPGDIMFRKIAYELLAEKGYHKGFLPYVSNQYGAEAFASGSKTFSSWHGRDVALVTDDLVFKKVFNGEYSSWADFKKAMFKQRIDKQDNLKPITIQYELGNPNSTKEVTITTAAQMQQLINEAAAKDITNIDRATSHTPASWVHLLKQKIYNAYLRTTDDFRNSIYK</sequence>
<protein>
    <recommendedName>
        <fullName>Zinc metalloprotease ZmpC</fullName>
        <ecNumber>3.4.24.-</ecNumber>
    </recommendedName>
    <alternativeName>
        <fullName>MMP-9 protease</fullName>
    </alternativeName>
</protein>
<dbReference type="EC" id="3.4.24.-"/>
<dbReference type="EMBL" id="AE005672">
    <property type="protein sequence ID" value="AAK74260.1"/>
    <property type="molecule type" value="Genomic_DNA"/>
</dbReference>
<dbReference type="PIR" id="C95008">
    <property type="entry name" value="C95008"/>
</dbReference>
<dbReference type="RefSeq" id="WP_000088129.1">
    <property type="nucleotide sequence ID" value="NC_003028.3"/>
</dbReference>
<dbReference type="SMR" id="Q97T80"/>
<dbReference type="MEROPS" id="M26.003"/>
<dbReference type="PaxDb" id="170187-SP_0071"/>
<dbReference type="EnsemblBacteria" id="AAK74260">
    <property type="protein sequence ID" value="AAK74260"/>
    <property type="gene ID" value="SP_0071"/>
</dbReference>
<dbReference type="KEGG" id="spn:SP_0071"/>
<dbReference type="eggNOG" id="COG3583">
    <property type="taxonomic scope" value="Bacteria"/>
</dbReference>
<dbReference type="PhylomeDB" id="Q97T80"/>
<dbReference type="BioCyc" id="SPNE170187:G1FZB-75-MONOMER"/>
<dbReference type="Proteomes" id="UP000000585">
    <property type="component" value="Chromosome"/>
</dbReference>
<dbReference type="GO" id="GO:0005576">
    <property type="term" value="C:extracellular region"/>
    <property type="evidence" value="ECO:0007669"/>
    <property type="project" value="UniProtKB-KW"/>
</dbReference>
<dbReference type="GO" id="GO:0016020">
    <property type="term" value="C:membrane"/>
    <property type="evidence" value="ECO:0007669"/>
    <property type="project" value="UniProtKB-SubCell"/>
</dbReference>
<dbReference type="GO" id="GO:0004222">
    <property type="term" value="F:metalloendopeptidase activity"/>
    <property type="evidence" value="ECO:0007669"/>
    <property type="project" value="InterPro"/>
</dbReference>
<dbReference type="GO" id="GO:0008270">
    <property type="term" value="F:zinc ion binding"/>
    <property type="evidence" value="ECO:0007669"/>
    <property type="project" value="InterPro"/>
</dbReference>
<dbReference type="GO" id="GO:0006508">
    <property type="term" value="P:proteolysis"/>
    <property type="evidence" value="ECO:0007669"/>
    <property type="project" value="UniProtKB-KW"/>
</dbReference>
<dbReference type="Gene3D" id="2.160.20.110">
    <property type="match status" value="1"/>
</dbReference>
<dbReference type="Gene3D" id="2.20.230.10">
    <property type="entry name" value="Resuscitation-promoting factor rpfb"/>
    <property type="match status" value="1"/>
</dbReference>
<dbReference type="InterPro" id="IPR011098">
    <property type="entry name" value="G5_dom"/>
</dbReference>
<dbReference type="InterPro" id="IPR011493">
    <property type="entry name" value="GLUG"/>
</dbReference>
<dbReference type="InterPro" id="IPR019931">
    <property type="entry name" value="LPXTG_anchor"/>
</dbReference>
<dbReference type="InterPro" id="IPR011505">
    <property type="entry name" value="Peptidase_M26_C_dom"/>
</dbReference>
<dbReference type="InterPro" id="IPR008006">
    <property type="entry name" value="Peptidase_M26_N_dom"/>
</dbReference>
<dbReference type="InterPro" id="IPR005877">
    <property type="entry name" value="YSIRK_signal_dom"/>
</dbReference>
<dbReference type="NCBIfam" id="TIGR01168">
    <property type="entry name" value="YSIRK_signal"/>
    <property type="match status" value="1"/>
</dbReference>
<dbReference type="NCBIfam" id="NF046021">
    <property type="entry name" value="ZmpC"/>
    <property type="match status" value="1"/>
</dbReference>
<dbReference type="Pfam" id="PF07501">
    <property type="entry name" value="G5"/>
    <property type="match status" value="1"/>
</dbReference>
<dbReference type="Pfam" id="PF07581">
    <property type="entry name" value="Glug"/>
    <property type="match status" value="1"/>
</dbReference>
<dbReference type="Pfam" id="PF07580">
    <property type="entry name" value="Peptidase_M26_C"/>
    <property type="match status" value="1"/>
</dbReference>
<dbReference type="Pfam" id="PF05342">
    <property type="entry name" value="Peptidase_M26_N"/>
    <property type="match status" value="1"/>
</dbReference>
<dbReference type="Pfam" id="PF04650">
    <property type="entry name" value="YSIRK_signal"/>
    <property type="match status" value="1"/>
</dbReference>
<dbReference type="SMART" id="SM01208">
    <property type="entry name" value="G5"/>
    <property type="match status" value="1"/>
</dbReference>
<dbReference type="PROSITE" id="PS51109">
    <property type="entry name" value="G5"/>
    <property type="match status" value="1"/>
</dbReference>
<dbReference type="PROSITE" id="PS50847">
    <property type="entry name" value="GRAM_POS_ANCHORING"/>
    <property type="match status" value="1"/>
</dbReference>
<dbReference type="PROSITE" id="PS00142">
    <property type="entry name" value="ZINC_PROTEASE"/>
    <property type="match status" value="1"/>
</dbReference>
<organism>
    <name type="scientific">Streptococcus pneumoniae serotype 4 (strain ATCC BAA-334 / TIGR4)</name>
    <dbReference type="NCBI Taxonomy" id="170187"/>
    <lineage>
        <taxon>Bacteria</taxon>
        <taxon>Bacillati</taxon>
        <taxon>Bacillota</taxon>
        <taxon>Bacilli</taxon>
        <taxon>Lactobacillales</taxon>
        <taxon>Streptococcaceae</taxon>
        <taxon>Streptococcus</taxon>
    </lineage>
</organism>
<keyword id="KW-0134">Cell wall</keyword>
<keyword id="KW-0378">Hydrolase</keyword>
<keyword id="KW-0472">Membrane</keyword>
<keyword id="KW-0479">Metal-binding</keyword>
<keyword id="KW-0482">Metalloprotease</keyword>
<keyword id="KW-0572">Peptidoglycan-anchor</keyword>
<keyword id="KW-0645">Protease</keyword>
<keyword id="KW-1185">Reference proteome</keyword>
<keyword id="KW-0964">Secreted</keyword>
<keyword id="KW-0732">Signal</keyword>
<keyword id="KW-0812">Transmembrane</keyword>
<keyword id="KW-1133">Transmembrane helix</keyword>
<keyword id="KW-0843">Virulence</keyword>
<keyword id="KW-0862">Zinc</keyword>
<gene>
    <name type="primary">zmpC</name>
    <name type="ordered locus">SP_0071</name>
</gene>
<feature type="signal peptide" evidence="2">
    <location>
        <begin position="1"/>
        <end position="42"/>
    </location>
</feature>
<feature type="propeptide" id="PRO_0000026845" evidence="2">
    <location>
        <begin position="43"/>
        <end position="95"/>
    </location>
</feature>
<feature type="chain" id="PRO_0000026846" description="Zinc metalloprotease ZmpC">
    <location>
        <begin position="96"/>
        <end position="1856"/>
    </location>
</feature>
<feature type="transmembrane region" description="Helical" evidence="2">
    <location>
        <begin position="97"/>
        <end position="117"/>
    </location>
</feature>
<feature type="transmembrane region" description="Helical" evidence="2">
    <location>
        <begin position="130"/>
        <end position="152"/>
    </location>
</feature>
<feature type="topological domain" description="Extracellular" evidence="2">
    <location>
        <begin position="153"/>
        <end position="1856"/>
    </location>
</feature>
<feature type="domain" description="G5" evidence="3">
    <location>
        <begin position="417"/>
        <end position="496"/>
    </location>
</feature>
<feature type="region of interest" description="Disordered" evidence="6">
    <location>
        <begin position="254"/>
        <end position="362"/>
    </location>
</feature>
<feature type="short sequence motif" description="LPXTG sorting signal" evidence="4">
    <location>
        <begin position="92"/>
        <end position="96"/>
    </location>
</feature>
<feature type="compositionally biased region" description="Polar residues" evidence="6">
    <location>
        <begin position="254"/>
        <end position="267"/>
    </location>
</feature>
<feature type="compositionally biased region" description="Polar residues" evidence="6">
    <location>
        <begin position="286"/>
        <end position="295"/>
    </location>
</feature>
<feature type="compositionally biased region" description="Basic and acidic residues" evidence="6">
    <location>
        <begin position="322"/>
        <end position="334"/>
    </location>
</feature>
<feature type="compositionally biased region" description="Basic and acidic residues" evidence="6">
    <location>
        <begin position="351"/>
        <end position="361"/>
    </location>
</feature>
<feature type="active site" evidence="5">
    <location>
        <position position="1503"/>
    </location>
</feature>
<feature type="binding site" evidence="1">
    <location>
        <position position="1502"/>
    </location>
    <ligand>
        <name>Zn(2+)</name>
        <dbReference type="ChEBI" id="CHEBI:29105"/>
    </ligand>
</feature>
<feature type="binding site" evidence="1">
    <location>
        <position position="1506"/>
    </location>
    <ligand>
        <name>Zn(2+)</name>
        <dbReference type="ChEBI" id="CHEBI:29105"/>
    </ligand>
</feature>
<feature type="binding site" evidence="1">
    <location>
        <position position="1526"/>
    </location>
    <ligand>
        <name>Zn(2+)</name>
        <dbReference type="ChEBI" id="CHEBI:29105"/>
    </ligand>
</feature>
<feature type="modified residue" description="Pentaglycyl murein peptidoglycan amidated threonine" evidence="4">
    <location>
        <position position="95"/>
    </location>
</feature>
<comment type="function">
    <text evidence="7 8">Zinc metalloproteinase that specifically cleaves human matrix metalloproteinase 9 (MMP-9), leading to its activation. May play a role in pneumococcal virulence and pathogenicity in the lung.</text>
</comment>
<comment type="cofactor">
    <cofactor evidence="1">
        <name>Zn(2+)</name>
        <dbReference type="ChEBI" id="CHEBI:29105"/>
    </cofactor>
    <text evidence="1">Binds 1 zinc ion per subunit.</text>
</comment>
<comment type="subcellular location">
    <subcellularLocation>
        <location evidence="1">Secreted</location>
        <location evidence="1">Cell wall</location>
    </subcellularLocation>
    <subcellularLocation>
        <location evidence="1">Membrane</location>
        <topology evidence="1">Multi-pass membrane protein</topology>
    </subcellularLocation>
    <subcellularLocation>
        <location evidence="1">Secreted</location>
        <location evidence="1">Cell wall</location>
        <topology evidence="1">Peptidoglycan-anchor</topology>
    </subcellularLocation>
</comment>
<comment type="PTM">
    <text evidence="1">The Gram-positive cell-wall anchor motif LPXTG is located in the N-terminal part, in contrast to such motifs in other known streptococcal and staphylococcal proteins. The protease could be cleaved by the sortase and anchored in the membrane via the two potential N-terminal transmembrane domains, whereas the propeptide located prior to the LPXTG motif would remain attached to the cell wall peptidoglycan by an amide bond (By similarity).</text>
</comment>
<comment type="similarity">
    <text evidence="9">Belongs to the peptidase M26 family.</text>
</comment>
<evidence type="ECO:0000250" key="1"/>
<evidence type="ECO:0000255" key="2"/>
<evidence type="ECO:0000255" key="3">
    <source>
        <dbReference type="PROSITE-ProRule" id="PRU00437"/>
    </source>
</evidence>
<evidence type="ECO:0000255" key="4">
    <source>
        <dbReference type="PROSITE-ProRule" id="PRU00477"/>
    </source>
</evidence>
<evidence type="ECO:0000255" key="5">
    <source>
        <dbReference type="PROSITE-ProRule" id="PRU10095"/>
    </source>
</evidence>
<evidence type="ECO:0000256" key="6">
    <source>
        <dbReference type="SAM" id="MobiDB-lite"/>
    </source>
</evidence>
<evidence type="ECO:0000269" key="7">
    <source>
    </source>
</evidence>
<evidence type="ECO:0000269" key="8">
    <source>
    </source>
</evidence>
<evidence type="ECO:0000305" key="9"/>
<reference key="1">
    <citation type="journal article" date="2001" name="Science">
        <title>Complete genome sequence of a virulent isolate of Streptococcus pneumoniae.</title>
        <authorList>
            <person name="Tettelin H."/>
            <person name="Nelson K.E."/>
            <person name="Paulsen I.T."/>
            <person name="Eisen J.A."/>
            <person name="Read T.D."/>
            <person name="Peterson S.N."/>
            <person name="Heidelberg J.F."/>
            <person name="DeBoy R.T."/>
            <person name="Haft D.H."/>
            <person name="Dodson R.J."/>
            <person name="Durkin A.S."/>
            <person name="Gwinn M.L."/>
            <person name="Kolonay J.F."/>
            <person name="Nelson W.C."/>
            <person name="Peterson J.D."/>
            <person name="Umayam L.A."/>
            <person name="White O."/>
            <person name="Salzberg S.L."/>
            <person name="Lewis M.R."/>
            <person name="Radune D."/>
            <person name="Holtzapple E.K."/>
            <person name="Khouri H.M."/>
            <person name="Wolf A.M."/>
            <person name="Utterback T.R."/>
            <person name="Hansen C.L."/>
            <person name="McDonald L.A."/>
            <person name="Feldblyum T.V."/>
            <person name="Angiuoli S.V."/>
            <person name="Dickinson T."/>
            <person name="Hickey E.K."/>
            <person name="Holt I.E."/>
            <person name="Loftus B.J."/>
            <person name="Yang F."/>
            <person name="Smith H.O."/>
            <person name="Venter J.C."/>
            <person name="Dougherty B.A."/>
            <person name="Morrison D.A."/>
            <person name="Hollingshead S.K."/>
            <person name="Fraser C.M."/>
        </authorList>
    </citation>
    <scope>NUCLEOTIDE SEQUENCE [LARGE SCALE GENOMIC DNA]</scope>
    <source>
        <strain>ATCC BAA-334 / TIGR4</strain>
    </source>
</reference>
<reference key="2">
    <citation type="journal article" date="2003" name="BMC Microbiol.">
        <title>The three extra-cellular zinc metalloproteinases of Streptococcus pneumoniae have a different impact on virulence in mice.</title>
        <authorList>
            <person name="Chiavolini D."/>
            <person name="Memmi G."/>
            <person name="Maggi T."/>
            <person name="Iannelli F."/>
            <person name="Pozzi G."/>
            <person name="Oggioni M.R."/>
        </authorList>
    </citation>
    <scope>ROLE IN VIRULENCE</scope>
</reference>
<reference key="3">
    <citation type="journal article" date="2003" name="Mol. Microbiol.">
        <title>Pneumococcal zinc metalloproteinase ZmpC cleaves human matrix metalloproteinase 9 and is a virulence factor in experimental pneumonia.</title>
        <authorList>
            <person name="Oggioni M.R."/>
            <person name="Memmi G."/>
            <person name="Maggi T."/>
            <person name="Chiavolini D."/>
            <person name="Iannelli F."/>
            <person name="Pozzi G."/>
        </authorList>
    </citation>
    <scope>FUNCTION</scope>
</reference>